<dbReference type="EC" id="6.5.1.2" evidence="1"/>
<dbReference type="EMBL" id="AM167904">
    <property type="protein sequence ID" value="CAJ48681.1"/>
    <property type="molecule type" value="Genomic_DNA"/>
</dbReference>
<dbReference type="RefSeq" id="WP_012416756.1">
    <property type="nucleotide sequence ID" value="NC_010645.1"/>
</dbReference>
<dbReference type="SMR" id="Q2KUU5"/>
<dbReference type="STRING" id="360910.BAV1072"/>
<dbReference type="KEGG" id="bav:BAV1072"/>
<dbReference type="eggNOG" id="COG0272">
    <property type="taxonomic scope" value="Bacteria"/>
</dbReference>
<dbReference type="HOGENOM" id="CLU_007764_2_1_4"/>
<dbReference type="OrthoDB" id="9759736at2"/>
<dbReference type="Proteomes" id="UP000001977">
    <property type="component" value="Chromosome"/>
</dbReference>
<dbReference type="GO" id="GO:0005829">
    <property type="term" value="C:cytosol"/>
    <property type="evidence" value="ECO:0007669"/>
    <property type="project" value="TreeGrafter"/>
</dbReference>
<dbReference type="GO" id="GO:0003677">
    <property type="term" value="F:DNA binding"/>
    <property type="evidence" value="ECO:0007669"/>
    <property type="project" value="InterPro"/>
</dbReference>
<dbReference type="GO" id="GO:0003911">
    <property type="term" value="F:DNA ligase (NAD+) activity"/>
    <property type="evidence" value="ECO:0007669"/>
    <property type="project" value="UniProtKB-UniRule"/>
</dbReference>
<dbReference type="GO" id="GO:0046872">
    <property type="term" value="F:metal ion binding"/>
    <property type="evidence" value="ECO:0007669"/>
    <property type="project" value="UniProtKB-KW"/>
</dbReference>
<dbReference type="GO" id="GO:0006281">
    <property type="term" value="P:DNA repair"/>
    <property type="evidence" value="ECO:0007669"/>
    <property type="project" value="UniProtKB-KW"/>
</dbReference>
<dbReference type="GO" id="GO:0006260">
    <property type="term" value="P:DNA replication"/>
    <property type="evidence" value="ECO:0007669"/>
    <property type="project" value="UniProtKB-KW"/>
</dbReference>
<dbReference type="CDD" id="cd17748">
    <property type="entry name" value="BRCT_DNA_ligase_like"/>
    <property type="match status" value="1"/>
</dbReference>
<dbReference type="CDD" id="cd00114">
    <property type="entry name" value="LIGANc"/>
    <property type="match status" value="1"/>
</dbReference>
<dbReference type="FunFam" id="1.10.150.20:FF:000006">
    <property type="entry name" value="DNA ligase"/>
    <property type="match status" value="1"/>
</dbReference>
<dbReference type="FunFam" id="1.10.150.20:FF:000007">
    <property type="entry name" value="DNA ligase"/>
    <property type="match status" value="1"/>
</dbReference>
<dbReference type="FunFam" id="1.10.287.610:FF:000002">
    <property type="entry name" value="DNA ligase"/>
    <property type="match status" value="1"/>
</dbReference>
<dbReference type="FunFam" id="2.40.50.140:FF:000012">
    <property type="entry name" value="DNA ligase"/>
    <property type="match status" value="1"/>
</dbReference>
<dbReference type="FunFam" id="3.30.470.30:FF:000001">
    <property type="entry name" value="DNA ligase"/>
    <property type="match status" value="1"/>
</dbReference>
<dbReference type="Gene3D" id="6.20.10.30">
    <property type="match status" value="1"/>
</dbReference>
<dbReference type="Gene3D" id="1.10.150.20">
    <property type="entry name" value="5' to 3' exonuclease, C-terminal subdomain"/>
    <property type="match status" value="2"/>
</dbReference>
<dbReference type="Gene3D" id="3.40.50.10190">
    <property type="entry name" value="BRCT domain"/>
    <property type="match status" value="1"/>
</dbReference>
<dbReference type="Gene3D" id="3.30.470.30">
    <property type="entry name" value="DNA ligase/mRNA capping enzyme"/>
    <property type="match status" value="1"/>
</dbReference>
<dbReference type="Gene3D" id="1.10.287.610">
    <property type="entry name" value="Helix hairpin bin"/>
    <property type="match status" value="1"/>
</dbReference>
<dbReference type="Gene3D" id="2.40.50.140">
    <property type="entry name" value="Nucleic acid-binding proteins"/>
    <property type="match status" value="1"/>
</dbReference>
<dbReference type="HAMAP" id="MF_01588">
    <property type="entry name" value="DNA_ligase_A"/>
    <property type="match status" value="1"/>
</dbReference>
<dbReference type="InterPro" id="IPR001357">
    <property type="entry name" value="BRCT_dom"/>
</dbReference>
<dbReference type="InterPro" id="IPR036420">
    <property type="entry name" value="BRCT_dom_sf"/>
</dbReference>
<dbReference type="InterPro" id="IPR041663">
    <property type="entry name" value="DisA/LigA_HHH"/>
</dbReference>
<dbReference type="InterPro" id="IPR001679">
    <property type="entry name" value="DNA_ligase"/>
</dbReference>
<dbReference type="InterPro" id="IPR018239">
    <property type="entry name" value="DNA_ligase_AS"/>
</dbReference>
<dbReference type="InterPro" id="IPR033136">
    <property type="entry name" value="DNA_ligase_CS"/>
</dbReference>
<dbReference type="InterPro" id="IPR013839">
    <property type="entry name" value="DNAligase_adenylation"/>
</dbReference>
<dbReference type="InterPro" id="IPR013840">
    <property type="entry name" value="DNAligase_N"/>
</dbReference>
<dbReference type="InterPro" id="IPR003583">
    <property type="entry name" value="Hlx-hairpin-Hlx_DNA-bd_motif"/>
</dbReference>
<dbReference type="InterPro" id="IPR012340">
    <property type="entry name" value="NA-bd_OB-fold"/>
</dbReference>
<dbReference type="InterPro" id="IPR004150">
    <property type="entry name" value="NAD_DNA_ligase_OB"/>
</dbReference>
<dbReference type="InterPro" id="IPR010994">
    <property type="entry name" value="RuvA_2-like"/>
</dbReference>
<dbReference type="InterPro" id="IPR004149">
    <property type="entry name" value="Znf_DNAligase_C4"/>
</dbReference>
<dbReference type="NCBIfam" id="TIGR00575">
    <property type="entry name" value="dnlj"/>
    <property type="match status" value="1"/>
</dbReference>
<dbReference type="NCBIfam" id="NF005932">
    <property type="entry name" value="PRK07956.1"/>
    <property type="match status" value="1"/>
</dbReference>
<dbReference type="PANTHER" id="PTHR23389">
    <property type="entry name" value="CHROMOSOME TRANSMISSION FIDELITY FACTOR 18"/>
    <property type="match status" value="1"/>
</dbReference>
<dbReference type="PANTHER" id="PTHR23389:SF9">
    <property type="entry name" value="DNA LIGASE"/>
    <property type="match status" value="1"/>
</dbReference>
<dbReference type="Pfam" id="PF00533">
    <property type="entry name" value="BRCT"/>
    <property type="match status" value="1"/>
</dbReference>
<dbReference type="Pfam" id="PF01653">
    <property type="entry name" value="DNA_ligase_aden"/>
    <property type="match status" value="1"/>
</dbReference>
<dbReference type="Pfam" id="PF03120">
    <property type="entry name" value="DNA_ligase_OB"/>
    <property type="match status" value="1"/>
</dbReference>
<dbReference type="Pfam" id="PF03119">
    <property type="entry name" value="DNA_ligase_ZBD"/>
    <property type="match status" value="1"/>
</dbReference>
<dbReference type="Pfam" id="PF12826">
    <property type="entry name" value="HHH_2"/>
    <property type="match status" value="1"/>
</dbReference>
<dbReference type="Pfam" id="PF14520">
    <property type="entry name" value="HHH_5"/>
    <property type="match status" value="1"/>
</dbReference>
<dbReference type="Pfam" id="PF22745">
    <property type="entry name" value="Nlig-Ia"/>
    <property type="match status" value="1"/>
</dbReference>
<dbReference type="PIRSF" id="PIRSF001604">
    <property type="entry name" value="LigA"/>
    <property type="match status" value="1"/>
</dbReference>
<dbReference type="SMART" id="SM00292">
    <property type="entry name" value="BRCT"/>
    <property type="match status" value="1"/>
</dbReference>
<dbReference type="SMART" id="SM00278">
    <property type="entry name" value="HhH1"/>
    <property type="match status" value="4"/>
</dbReference>
<dbReference type="SMART" id="SM00532">
    <property type="entry name" value="LIGANc"/>
    <property type="match status" value="1"/>
</dbReference>
<dbReference type="SUPFAM" id="SSF52113">
    <property type="entry name" value="BRCT domain"/>
    <property type="match status" value="1"/>
</dbReference>
<dbReference type="SUPFAM" id="SSF56091">
    <property type="entry name" value="DNA ligase/mRNA capping enzyme, catalytic domain"/>
    <property type="match status" value="1"/>
</dbReference>
<dbReference type="SUPFAM" id="SSF50249">
    <property type="entry name" value="Nucleic acid-binding proteins"/>
    <property type="match status" value="1"/>
</dbReference>
<dbReference type="SUPFAM" id="SSF47781">
    <property type="entry name" value="RuvA domain 2-like"/>
    <property type="match status" value="1"/>
</dbReference>
<dbReference type="PROSITE" id="PS50172">
    <property type="entry name" value="BRCT"/>
    <property type="match status" value="1"/>
</dbReference>
<dbReference type="PROSITE" id="PS01055">
    <property type="entry name" value="DNA_LIGASE_N1"/>
    <property type="match status" value="1"/>
</dbReference>
<dbReference type="PROSITE" id="PS01056">
    <property type="entry name" value="DNA_LIGASE_N2"/>
    <property type="match status" value="1"/>
</dbReference>
<gene>
    <name evidence="1" type="primary">ligA</name>
    <name type="ordered locus">BAV1072</name>
</gene>
<comment type="function">
    <text evidence="1">DNA ligase that catalyzes the formation of phosphodiester linkages between 5'-phosphoryl and 3'-hydroxyl groups in double-stranded DNA using NAD as a coenzyme and as the energy source for the reaction. It is essential for DNA replication and repair of damaged DNA.</text>
</comment>
<comment type="catalytic activity">
    <reaction evidence="1">
        <text>NAD(+) + (deoxyribonucleotide)n-3'-hydroxyl + 5'-phospho-(deoxyribonucleotide)m = (deoxyribonucleotide)n+m + AMP + beta-nicotinamide D-nucleotide.</text>
        <dbReference type="EC" id="6.5.1.2"/>
    </reaction>
</comment>
<comment type="cofactor">
    <cofactor evidence="1">
        <name>Mg(2+)</name>
        <dbReference type="ChEBI" id="CHEBI:18420"/>
    </cofactor>
    <cofactor evidence="1">
        <name>Mn(2+)</name>
        <dbReference type="ChEBI" id="CHEBI:29035"/>
    </cofactor>
</comment>
<comment type="similarity">
    <text evidence="1">Belongs to the NAD-dependent DNA ligase family. LigA subfamily.</text>
</comment>
<reference key="1">
    <citation type="journal article" date="2006" name="J. Bacteriol.">
        <title>Comparison of the genome sequence of the poultry pathogen Bordetella avium with those of B. bronchiseptica, B. pertussis, and B. parapertussis reveals extensive diversity in surface structures associated with host interaction.</title>
        <authorList>
            <person name="Sebaihia M."/>
            <person name="Preston A."/>
            <person name="Maskell D.J."/>
            <person name="Kuzmiak H."/>
            <person name="Connell T.D."/>
            <person name="King N.D."/>
            <person name="Orndorff P.E."/>
            <person name="Miyamoto D.M."/>
            <person name="Thomson N.R."/>
            <person name="Harris D."/>
            <person name="Goble A."/>
            <person name="Lord A."/>
            <person name="Murphy L."/>
            <person name="Quail M.A."/>
            <person name="Rutter S."/>
            <person name="Squares R."/>
            <person name="Squares S."/>
            <person name="Woodward J."/>
            <person name="Parkhill J."/>
            <person name="Temple L.M."/>
        </authorList>
    </citation>
    <scope>NUCLEOTIDE SEQUENCE [LARGE SCALE GENOMIC DNA]</scope>
    <source>
        <strain>197N</strain>
    </source>
</reference>
<evidence type="ECO:0000255" key="1">
    <source>
        <dbReference type="HAMAP-Rule" id="MF_01588"/>
    </source>
</evidence>
<feature type="chain" id="PRO_0000313143" description="DNA ligase">
    <location>
        <begin position="1"/>
        <end position="695"/>
    </location>
</feature>
<feature type="domain" description="BRCT" evidence="1">
    <location>
        <begin position="617"/>
        <end position="695"/>
    </location>
</feature>
<feature type="active site" description="N6-AMP-lysine intermediate" evidence="1">
    <location>
        <position position="125"/>
    </location>
</feature>
<feature type="binding site" evidence="1">
    <location>
        <begin position="36"/>
        <end position="40"/>
    </location>
    <ligand>
        <name>NAD(+)</name>
        <dbReference type="ChEBI" id="CHEBI:57540"/>
    </ligand>
</feature>
<feature type="binding site" evidence="1">
    <location>
        <begin position="85"/>
        <end position="86"/>
    </location>
    <ligand>
        <name>NAD(+)</name>
        <dbReference type="ChEBI" id="CHEBI:57540"/>
    </ligand>
</feature>
<feature type="binding site" evidence="1">
    <location>
        <position position="123"/>
    </location>
    <ligand>
        <name>NAD(+)</name>
        <dbReference type="ChEBI" id="CHEBI:57540"/>
    </ligand>
</feature>
<feature type="binding site" evidence="1">
    <location>
        <position position="146"/>
    </location>
    <ligand>
        <name>NAD(+)</name>
        <dbReference type="ChEBI" id="CHEBI:57540"/>
    </ligand>
</feature>
<feature type="binding site" evidence="1">
    <location>
        <position position="182"/>
    </location>
    <ligand>
        <name>NAD(+)</name>
        <dbReference type="ChEBI" id="CHEBI:57540"/>
    </ligand>
</feature>
<feature type="binding site" evidence="1">
    <location>
        <position position="318"/>
    </location>
    <ligand>
        <name>NAD(+)</name>
        <dbReference type="ChEBI" id="CHEBI:57540"/>
    </ligand>
</feature>
<feature type="binding site" evidence="1">
    <location>
        <position position="342"/>
    </location>
    <ligand>
        <name>NAD(+)</name>
        <dbReference type="ChEBI" id="CHEBI:57540"/>
    </ligand>
</feature>
<feature type="binding site" evidence="1">
    <location>
        <position position="436"/>
    </location>
    <ligand>
        <name>Zn(2+)</name>
        <dbReference type="ChEBI" id="CHEBI:29105"/>
    </ligand>
</feature>
<feature type="binding site" evidence="1">
    <location>
        <position position="439"/>
    </location>
    <ligand>
        <name>Zn(2+)</name>
        <dbReference type="ChEBI" id="CHEBI:29105"/>
    </ligand>
</feature>
<feature type="binding site" evidence="1">
    <location>
        <position position="454"/>
    </location>
    <ligand>
        <name>Zn(2+)</name>
        <dbReference type="ChEBI" id="CHEBI:29105"/>
    </ligand>
</feature>
<feature type="binding site" evidence="1">
    <location>
        <position position="460"/>
    </location>
    <ligand>
        <name>Zn(2+)</name>
        <dbReference type="ChEBI" id="CHEBI:29105"/>
    </ligand>
</feature>
<organism>
    <name type="scientific">Bordetella avium (strain 197N)</name>
    <dbReference type="NCBI Taxonomy" id="360910"/>
    <lineage>
        <taxon>Bacteria</taxon>
        <taxon>Pseudomonadati</taxon>
        <taxon>Pseudomonadota</taxon>
        <taxon>Betaproteobacteria</taxon>
        <taxon>Burkholderiales</taxon>
        <taxon>Alcaligenaceae</taxon>
        <taxon>Bordetella</taxon>
    </lineage>
</organism>
<proteinExistence type="inferred from homology"/>
<keyword id="KW-0227">DNA damage</keyword>
<keyword id="KW-0234">DNA repair</keyword>
<keyword id="KW-0235">DNA replication</keyword>
<keyword id="KW-0436">Ligase</keyword>
<keyword id="KW-0460">Magnesium</keyword>
<keyword id="KW-0464">Manganese</keyword>
<keyword id="KW-0479">Metal-binding</keyword>
<keyword id="KW-0520">NAD</keyword>
<keyword id="KW-1185">Reference proteome</keyword>
<keyword id="KW-0862">Zinc</keyword>
<sequence length="695" mass="75425">MSAFEQAAREQAARLRAEIAQHNIRYYVYDEPSITDADYDALMRELMALEAQHPELVTPDSPTQRVGAAPLAEFGSVRHAVPMLSLGNGFEDEDVLAFDKRVSDTLREAGLLGPAEQAHYFCELKLDGLAISLRYENGELVQAATRGDGQEGEDVTANIRTIRAIPLQLRAGAPAVLEVRGEVLMNRADFEKLNQKQAARGEKIFVNPRNAAAGSLRQLDPRVTAQRPLRFFAYSWGEVQGLSRDDAPAFDEASPGLVSTLPRDTHGGMLDWLAGLGLPVNVRFNHKAQGAEGLLAFYRRIGAERGSLPYDIDGLVYKVDALAAQRVLGYVARAPRWALAHKFPAEEATTELLDIEVQVGRTGAITPVARLKPVFVGGVTVTNATLHNEDEIRRKDVRIGDRVIVRRAGDVIPEVVGPVLEKRSGELPQFVMPTHCPICGSAIERLVDEAIARCTGGLFCPAQRKQTLLHAAGRKALDIEGLGEKLVEQLVDNGSLKTLADVFRLNAFELAALDRMGKKSADNLVAAIDQARRPSLGRLLFALGIRHVGETTARDVARHFGNIDAIMDADEAALLAVPDVGPVVAGSIHRFFQEAHNREVIRELEKQGVHPQAEAQLQSGDLAGKTFVLTGTMPTWSRDEATRHILAAGGKVSGSVSKKTAYVVAGEEAGSKLVKARELGVTILDEDGLKALLSQ</sequence>
<name>DNLJ_BORA1</name>
<protein>
    <recommendedName>
        <fullName evidence="1">DNA ligase</fullName>
        <ecNumber evidence="1">6.5.1.2</ecNumber>
    </recommendedName>
    <alternativeName>
        <fullName evidence="1">Polydeoxyribonucleotide synthase [NAD(+)]</fullName>
    </alternativeName>
</protein>
<accession>Q2KUU5</accession>